<dbReference type="SMR" id="P85523"/>
<dbReference type="GO" id="GO:0005576">
    <property type="term" value="C:extracellular region"/>
    <property type="evidence" value="ECO:0007669"/>
    <property type="project" value="UniProtKB-SubCell"/>
</dbReference>
<dbReference type="GO" id="GO:0006952">
    <property type="term" value="P:defense response"/>
    <property type="evidence" value="ECO:0007669"/>
    <property type="project" value="UniProtKB-KW"/>
</dbReference>
<dbReference type="InterPro" id="IPR022731">
    <property type="entry name" value="Dermaseptin_dom"/>
</dbReference>
<dbReference type="Pfam" id="PF12121">
    <property type="entry name" value="DD_K"/>
    <property type="match status" value="1"/>
</dbReference>
<comment type="function">
    <text evidence="1">Has antimicrobial activity.</text>
</comment>
<comment type="subcellular location">
    <subcellularLocation>
        <location evidence="3">Secreted</location>
    </subcellularLocation>
</comment>
<comment type="tissue specificity">
    <text evidence="3">Expressed by the skin glands.</text>
</comment>
<comment type="mass spectrometry"/>
<comment type="similarity">
    <text evidence="2">Belongs to the frog skin active peptide (FSAP) family. Dermaseptin subfamily.</text>
</comment>
<reference evidence="5" key="1">
    <citation type="submission" date="2008-04" db="UniProtKB">
        <title>Dermaseptins and phylloseptins of Phyllomedusa (Hylidae) secretion.</title>
        <authorList>
            <person name="de Sa Mandel S.M."/>
            <person name="Mundim N.C.C.R."/>
            <person name="Silva L.P."/>
            <person name="Prates M.V."/>
            <person name="Bloch C. Jr."/>
        </authorList>
    </citation>
    <scope>PROTEIN SEQUENCE</scope>
    <scope>SUBCELLULAR LOCATION</scope>
    <scope>TISSUE SPECIFICITY</scope>
    <scope>MASS SPECTROMETRY</scope>
    <source>
        <tissue evidence="3">Skin secretion</tissue>
    </source>
</reference>
<proteinExistence type="evidence at protein level"/>
<sequence>ALWKDLLKNVGIAAGKAVLNKVTDMVNQ</sequence>
<protein>
    <recommendedName>
        <fullName>Dermaseptin-1</fullName>
        <shortName evidence="4">DStomo01</shortName>
    </recommendedName>
</protein>
<organism>
    <name type="scientific">Phyllomedusa tomopterna</name>
    <name type="common">Tiger-striped leaf frog</name>
    <name type="synonym">Pithecopus tomopternus</name>
    <dbReference type="NCBI Taxonomy" id="248868"/>
    <lineage>
        <taxon>Eukaryota</taxon>
        <taxon>Metazoa</taxon>
        <taxon>Chordata</taxon>
        <taxon>Craniata</taxon>
        <taxon>Vertebrata</taxon>
        <taxon>Euteleostomi</taxon>
        <taxon>Amphibia</taxon>
        <taxon>Batrachia</taxon>
        <taxon>Anura</taxon>
        <taxon>Neobatrachia</taxon>
        <taxon>Hyloidea</taxon>
        <taxon>Hylidae</taxon>
        <taxon>Phyllomedusinae</taxon>
        <taxon>Phyllomedusa</taxon>
    </lineage>
</organism>
<feature type="peptide" id="PRO_0000392465" description="Dermaseptin-1" evidence="3">
    <location>
        <begin position="1"/>
        <end position="28"/>
    </location>
</feature>
<feature type="modified residue" description="Glutamine amide" evidence="1">
    <location>
        <position position="28"/>
    </location>
</feature>
<evidence type="ECO:0000250" key="1">
    <source>
        <dbReference type="UniProtKB" id="P84922"/>
    </source>
</evidence>
<evidence type="ECO:0000255" key="2"/>
<evidence type="ECO:0000269" key="3">
    <source ref="1"/>
</evidence>
<evidence type="ECO:0000303" key="4">
    <source ref="1"/>
</evidence>
<evidence type="ECO:0000305" key="5"/>
<keyword id="KW-0027">Amidation</keyword>
<keyword id="KW-0878">Amphibian defense peptide</keyword>
<keyword id="KW-0929">Antimicrobial</keyword>
<keyword id="KW-0903">Direct protein sequencing</keyword>
<keyword id="KW-0964">Secreted</keyword>
<name>DMS1_PHYTM</name>
<accession>P85523</accession>